<sequence length="58" mass="6458">MAGPESDAQYQFTGIKKYFNSYTLTGRMNCVLATYGSIALIVLYFKLRSKKTPAVKAT</sequence>
<organism>
    <name type="scientific">Homo sapiens</name>
    <name type="common">Human</name>
    <dbReference type="NCBI Taxonomy" id="9606"/>
    <lineage>
        <taxon>Eukaryota</taxon>
        <taxon>Metazoa</taxon>
        <taxon>Chordata</taxon>
        <taxon>Craniata</taxon>
        <taxon>Vertebrata</taxon>
        <taxon>Euteleostomi</taxon>
        <taxon>Mammalia</taxon>
        <taxon>Eutheria</taxon>
        <taxon>Euarchontoglires</taxon>
        <taxon>Primates</taxon>
        <taxon>Haplorrhini</taxon>
        <taxon>Catarrhini</taxon>
        <taxon>Hominidae</taxon>
        <taxon>Homo</taxon>
    </lineage>
</organism>
<gene>
    <name evidence="10" type="primary">ATP5MK</name>
    <name type="synonym">ATP5MD</name>
    <name type="synonym">DAPIT</name>
    <name type="synonym">HCVFTP2</name>
    <name type="synonym">USMG5</name>
    <name type="ORF">PD04912</name>
</gene>
<accession>Q96IX5</accession>
<accession>B2R4N2</accession>
<accession>D3DR92</accession>
<keyword id="KW-0007">Acetylation</keyword>
<keyword id="KW-0472">Membrane</keyword>
<keyword id="KW-0496">Mitochondrion</keyword>
<keyword id="KW-1274">Primary mitochondrial disease</keyword>
<keyword id="KW-1267">Proteomics identification</keyword>
<keyword id="KW-1185">Reference proteome</keyword>
<keyword id="KW-0812">Transmembrane</keyword>
<keyword id="KW-1133">Transmembrane helix</keyword>
<comment type="function">
    <text evidence="1 2 6 7 9">Subunit k, of the mitochondrial membrane ATP synthase complex (F(1)F(0) ATP synthase or Complex V) that produces ATP from ADP in the presence of a proton gradient across the membrane which is generated by electron transport complexes of the respiratory chain (Probable). ATP synthase complex consist of a soluble F(1) head domain - the catalytic core - and a membrane F(1) domain - the membrane proton channel (By similarity). These two domains are linked by a central stalk rotating inside the F(1) region and a stationary peripheral stalk (By similarity). During catalysis, ATP synthesis in the catalytic domain of F(1) is coupled via a rotary mechanism of the central stalk subunits to proton translocation (Probable). In vivo, can only synthesize ATP although its ATP hydrolase activity can be activated artificially in vitro (By similarity). Part of the complex F(0) domain (By similarity). Required for dimerization of the ATP synthase complex and as such regulates ATP synthesis in the mitochondria (PubMed:21345788, PubMed:29917077).</text>
</comment>
<comment type="subunit">
    <text evidence="2 7">Component of the ATP synthase complex composed at least of ATP5F1A/subunit alpha, ATP5F1B/subunit beta, ATP5MC1/subunit c (homooctomer), MT-ATP6/subunit a, MT-ATP8/subunit 8, ATP5ME/subunit e, ATP5MF/subunit f, ATP5MG/subunit g, ATP5MK/subunit k, ATP5MJ/subunit j, ATP5F1C/subunit gamma, ATP5F1D/subunit delta, ATP5F1E/subunit epsilon, ATP5PF/subunit F6, ATP5PB/subunit b, ATP5PD/subunit d, ATP5PO/subunit OSCP (By similarity). ATP synthase complex consists of a soluble F(1) head domain (subunits alpha(3) and beta(3)) - the catalytic core - and a membrane F(0) domain - the membrane proton channel (subunits c, a, 8, e, f, g, k and j) (By similarity). These two domains are linked by a central stalk (subunits gamma, delta, and epsilon) rotating inside the F1 region and a stationary peripheral stalk (subunits F6, b, d, and OSCP) (By similarity). The ATP synthase complex/complex V exists as a monomeric and a dimeric supercomplex that helps shape mitochondrial cristae to optimize proton flow (PubMed:29917077).</text>
</comment>
<comment type="subcellular location">
    <subcellularLocation>
        <location evidence="6 7">Mitochondrion membrane</location>
        <topology evidence="4">Single-pass membrane protein</topology>
    </subcellularLocation>
</comment>
<comment type="induction">
    <text evidence="5">Transactivated by SBP1.</text>
</comment>
<comment type="disease" evidence="7">
    <disease id="DI-05711">
        <name>Mitochondrial complex V deficiency, nuclear type 6</name>
        <acronym>MC5DN6</acronym>
        <description>An autosomal recessive mitochondrial disorder characterized by gross motor developmental delay manifesting in the first years of life, and subsequent episodic developmental regression. The episodes are associated with metabolic stress, including fever, illness, and general anesthesia. Patients develop gait difficulties or loss of ambulation, as well as other variable abnormalities, including abnormal movements, hemiplegia, and persistent lethargy. Brain imaging shows degenerative features in the basal ganglia and brainstem consistent with a diagnosis of Leigh syndrome.</description>
        <dbReference type="MIM" id="618683"/>
    </disease>
    <text>The disease is caused by variants affecting the gene represented in this entry.</text>
</comment>
<name>ATPMK_HUMAN</name>
<dbReference type="EMBL" id="AY740522">
    <property type="protein sequence ID" value="AAU89079.1"/>
    <property type="molecule type" value="mRNA"/>
</dbReference>
<dbReference type="EMBL" id="AJ272056">
    <property type="protein sequence ID" value="CAC81243.1"/>
    <property type="molecule type" value="mRNA"/>
</dbReference>
<dbReference type="EMBL" id="AK311888">
    <property type="protein sequence ID" value="BAG34829.1"/>
    <property type="molecule type" value="mRNA"/>
</dbReference>
<dbReference type="EMBL" id="AL591408">
    <property type="status" value="NOT_ANNOTATED_CDS"/>
    <property type="molecule type" value="Genomic_DNA"/>
</dbReference>
<dbReference type="EMBL" id="CH471066">
    <property type="protein sequence ID" value="EAW49642.1"/>
    <property type="molecule type" value="Genomic_DNA"/>
</dbReference>
<dbReference type="EMBL" id="CH471066">
    <property type="protein sequence ID" value="EAW49643.1"/>
    <property type="molecule type" value="Genomic_DNA"/>
</dbReference>
<dbReference type="EMBL" id="CH471066">
    <property type="protein sequence ID" value="EAW49644.1"/>
    <property type="molecule type" value="Genomic_DNA"/>
</dbReference>
<dbReference type="EMBL" id="BC007087">
    <property type="protein sequence ID" value="AAH07087.1"/>
    <property type="molecule type" value="mRNA"/>
</dbReference>
<dbReference type="EMBL" id="BC072683">
    <property type="protein sequence ID" value="AAH72683.1"/>
    <property type="molecule type" value="mRNA"/>
</dbReference>
<dbReference type="EMBL" id="BC091507">
    <property type="protein sequence ID" value="AAH91507.1"/>
    <property type="molecule type" value="mRNA"/>
</dbReference>
<dbReference type="CCDS" id="CCDS7548.1"/>
<dbReference type="RefSeq" id="NP_001193355.1">
    <property type="nucleotide sequence ID" value="NM_001206426.2"/>
</dbReference>
<dbReference type="RefSeq" id="NP_001193356.1">
    <property type="nucleotide sequence ID" value="NM_001206427.2"/>
</dbReference>
<dbReference type="RefSeq" id="NP_116136.1">
    <property type="nucleotide sequence ID" value="NM_032747.4"/>
</dbReference>
<dbReference type="RefSeq" id="XP_024304005.1">
    <property type="nucleotide sequence ID" value="XM_024448237.2"/>
</dbReference>
<dbReference type="RefSeq" id="XP_054222974.1">
    <property type="nucleotide sequence ID" value="XM_054366999.1"/>
</dbReference>
<dbReference type="SMR" id="Q96IX5"/>
<dbReference type="BioGRID" id="124287">
    <property type="interactions" value="129"/>
</dbReference>
<dbReference type="ComplexPortal" id="CPX-6151">
    <property type="entry name" value="Mitochondrial proton-transporting ATP synthase complex"/>
</dbReference>
<dbReference type="FunCoup" id="Q96IX5">
    <property type="interactions" value="1120"/>
</dbReference>
<dbReference type="IntAct" id="Q96IX5">
    <property type="interactions" value="75"/>
</dbReference>
<dbReference type="MINT" id="Q96IX5"/>
<dbReference type="STRING" id="9606.ENSP00000358840"/>
<dbReference type="GlyGen" id="Q96IX5">
    <property type="glycosylation" value="1 site, 1 O-linked glycan (1 site)"/>
</dbReference>
<dbReference type="iPTMnet" id="Q96IX5"/>
<dbReference type="PhosphoSitePlus" id="Q96IX5"/>
<dbReference type="SwissPalm" id="Q96IX5"/>
<dbReference type="BioMuta" id="USMG5"/>
<dbReference type="jPOST" id="Q96IX5"/>
<dbReference type="MassIVE" id="Q96IX5"/>
<dbReference type="PaxDb" id="9606-ENSP00000358840"/>
<dbReference type="PeptideAtlas" id="Q96IX5"/>
<dbReference type="ProteomicsDB" id="76865"/>
<dbReference type="Pumba" id="Q96IX5"/>
<dbReference type="TopDownProteomics" id="Q96IX5"/>
<dbReference type="Antibodypedia" id="46057">
    <property type="antibodies" value="72 antibodies from 15 providers"/>
</dbReference>
<dbReference type="DNASU" id="84833"/>
<dbReference type="Ensembl" id="ENST00000309579.7">
    <property type="protein sequence ID" value="ENSP00000311245.3"/>
    <property type="gene ID" value="ENSG00000173915.16"/>
</dbReference>
<dbReference type="Ensembl" id="ENST00000337003.4">
    <property type="protein sequence ID" value="ENSP00000337705.4"/>
    <property type="gene ID" value="ENSG00000173915.16"/>
</dbReference>
<dbReference type="Ensembl" id="ENST00000369811.5">
    <property type="protein sequence ID" value="ENSP00000358826.1"/>
    <property type="gene ID" value="ENSG00000173915.16"/>
</dbReference>
<dbReference type="Ensembl" id="ENST00000369815.6">
    <property type="protein sequence ID" value="ENSP00000358830.1"/>
    <property type="gene ID" value="ENSG00000173915.16"/>
</dbReference>
<dbReference type="Ensembl" id="ENST00000369825.6">
    <property type="protein sequence ID" value="ENSP00000358840.1"/>
    <property type="gene ID" value="ENSG00000173915.16"/>
</dbReference>
<dbReference type="GeneID" id="84833"/>
<dbReference type="KEGG" id="hsa:84833"/>
<dbReference type="MANE-Select" id="ENST00000369815.6">
    <property type="protein sequence ID" value="ENSP00000358830.1"/>
    <property type="RefSeq nucleotide sequence ID" value="NM_001206427.2"/>
    <property type="RefSeq protein sequence ID" value="NP_001193356.1"/>
</dbReference>
<dbReference type="UCSC" id="uc001kww.4">
    <property type="organism name" value="human"/>
</dbReference>
<dbReference type="AGR" id="HGNC:30889"/>
<dbReference type="CTD" id="84833"/>
<dbReference type="DisGeNET" id="84833"/>
<dbReference type="GeneCards" id="ATP5MK"/>
<dbReference type="HGNC" id="HGNC:30889">
    <property type="gene designation" value="ATP5MK"/>
</dbReference>
<dbReference type="HPA" id="ENSG00000173915">
    <property type="expression patterns" value="Low tissue specificity"/>
</dbReference>
<dbReference type="MalaCards" id="ATP5MK"/>
<dbReference type="MIM" id="615204">
    <property type="type" value="gene"/>
</dbReference>
<dbReference type="MIM" id="618683">
    <property type="type" value="phenotype"/>
</dbReference>
<dbReference type="neXtProt" id="NX_Q96IX5"/>
<dbReference type="OpenTargets" id="ENSG00000173915"/>
<dbReference type="Orphanet" id="254913">
    <property type="disease" value="Isolated ATP synthase deficiency"/>
</dbReference>
<dbReference type="PharmGKB" id="PA134968209"/>
<dbReference type="VEuPathDB" id="HostDB:ENSG00000173915"/>
<dbReference type="eggNOG" id="ENOG502S82X">
    <property type="taxonomic scope" value="Eukaryota"/>
</dbReference>
<dbReference type="GeneTree" id="ENSGT00390000015489"/>
<dbReference type="HOGENOM" id="CLU_209345_1_0_1"/>
<dbReference type="InParanoid" id="Q96IX5"/>
<dbReference type="OMA" id="GIAKHFN"/>
<dbReference type="OrthoDB" id="9435504at2759"/>
<dbReference type="PAN-GO" id="Q96IX5">
    <property type="GO annotations" value="1 GO annotation based on evolutionary models"/>
</dbReference>
<dbReference type="PhylomeDB" id="Q96IX5"/>
<dbReference type="TreeFam" id="TF324671"/>
<dbReference type="PathwayCommons" id="Q96IX5"/>
<dbReference type="Reactome" id="R-HSA-163210">
    <property type="pathway name" value="Formation of ATP by chemiosmotic coupling"/>
</dbReference>
<dbReference type="Reactome" id="R-HSA-8949613">
    <property type="pathway name" value="Cristae formation"/>
</dbReference>
<dbReference type="SignaLink" id="Q96IX5"/>
<dbReference type="BioGRID-ORCS" id="84833">
    <property type="hits" value="28 hits in 1009 CRISPR screens"/>
</dbReference>
<dbReference type="CD-CODE" id="FB4E32DD">
    <property type="entry name" value="Presynaptic clusters and postsynaptic densities"/>
</dbReference>
<dbReference type="ChiTaRS" id="USMG5">
    <property type="organism name" value="human"/>
</dbReference>
<dbReference type="GenomeRNAi" id="84833"/>
<dbReference type="Pharos" id="Q96IX5">
    <property type="development level" value="Tbio"/>
</dbReference>
<dbReference type="PRO" id="PR:Q96IX5"/>
<dbReference type="Proteomes" id="UP000005640">
    <property type="component" value="Chromosome 10"/>
</dbReference>
<dbReference type="RNAct" id="Q96IX5">
    <property type="molecule type" value="protein"/>
</dbReference>
<dbReference type="Bgee" id="ENSG00000173915">
    <property type="expression patterns" value="Expressed in quadriceps femoris and 104 other cell types or tissues"/>
</dbReference>
<dbReference type="GO" id="GO:0005743">
    <property type="term" value="C:mitochondrial inner membrane"/>
    <property type="evidence" value="ECO:0000304"/>
    <property type="project" value="Reactome"/>
</dbReference>
<dbReference type="GO" id="GO:0005739">
    <property type="term" value="C:mitochondrion"/>
    <property type="evidence" value="ECO:0000314"/>
    <property type="project" value="HPA"/>
</dbReference>
<dbReference type="GO" id="GO:0045259">
    <property type="term" value="C:proton-transporting ATP synthase complex"/>
    <property type="evidence" value="ECO:0000315"/>
    <property type="project" value="UniProtKB"/>
</dbReference>
<dbReference type="GO" id="GO:0015986">
    <property type="term" value="P:proton motive force-driven ATP synthesis"/>
    <property type="evidence" value="ECO:0000303"/>
    <property type="project" value="ComplexPortal"/>
</dbReference>
<dbReference type="InterPro" id="IPR009125">
    <property type="entry name" value="ATPMK"/>
</dbReference>
<dbReference type="PANTHER" id="PTHR34038">
    <property type="entry name" value="ATP SYNTHASE MEMBRANE SUBUNIT DAPIT, MITOCHONDRIAL"/>
    <property type="match status" value="1"/>
</dbReference>
<dbReference type="PANTHER" id="PTHR34038:SF1">
    <property type="entry name" value="ATP SYNTHASE MEMBRANE SUBUNIT K, MITOCHONDRIAL"/>
    <property type="match status" value="1"/>
</dbReference>
<dbReference type="Pfam" id="PF14960">
    <property type="entry name" value="ATP_synth_reg"/>
    <property type="match status" value="1"/>
</dbReference>
<dbReference type="PRINTS" id="PR01821">
    <property type="entry name" value="DAPIT"/>
</dbReference>
<protein>
    <recommendedName>
        <fullName evidence="8">ATP synthase F(0) complex subunit k, mitochondrial</fullName>
    </recommendedName>
    <alternativeName>
        <fullName evidence="8">ATP synthase membrane subunit DAPIT, mitochondrial</fullName>
    </alternativeName>
    <alternativeName>
        <fullName>Diabetes-associated protein in insulin-sensitive tissues</fullName>
    </alternativeName>
    <alternativeName>
        <fullName>HCV F-transactivated protein 2</fullName>
    </alternativeName>
    <alternativeName>
        <fullName evidence="8">Up-regulated during skeletal muscle growth protein 5</fullName>
    </alternativeName>
</protein>
<feature type="initiator methionine" description="Removed" evidence="11">
    <location>
        <position position="1"/>
    </location>
</feature>
<feature type="chain" id="PRO_0000231578" description="ATP synthase F(0) complex subunit k, mitochondrial">
    <location>
        <begin position="2"/>
        <end position="58"/>
    </location>
</feature>
<feature type="transmembrane region" description="Helical" evidence="4">
    <location>
        <begin position="23"/>
        <end position="45"/>
    </location>
</feature>
<feature type="modified residue" description="N6-acetyllysine" evidence="3">
    <location>
        <position position="16"/>
    </location>
</feature>
<feature type="modified residue" description="N6-acetyllysine" evidence="3">
    <location>
        <position position="17"/>
    </location>
</feature>
<proteinExistence type="evidence at protein level"/>
<reference key="1">
    <citation type="journal article" date="2005" name="World J. Gastroenterol.">
        <title>Study of transactivating effect of pre-S2 protein of hepatitis B virus and cloning of genes transactivated by pre-S2 protein with suppression subtractive hybridization.</title>
        <authorList>
            <person name="Ji D."/>
            <person name="Cheng J."/>
            <person name="Chen G.-F."/>
            <person name="Liu Y."/>
            <person name="Wang L."/>
            <person name="Guo J."/>
        </authorList>
    </citation>
    <scope>NUCLEOTIDE SEQUENCE [MRNA]</scope>
    <scope>INDUCTION BY SBP1</scope>
</reference>
<reference key="2">
    <citation type="submission" date="2000-02" db="EMBL/GenBank/DDBJ databases">
        <title>Study of 100 skeletal muscle full length mRNA.</title>
        <authorList>
            <person name="Frigimelica E."/>
            <person name="Lanfranchi G."/>
        </authorList>
    </citation>
    <scope>NUCLEOTIDE SEQUENCE [LARGE SCALE MRNA]</scope>
    <source>
        <tissue>Skeletal muscle</tissue>
    </source>
</reference>
<reference key="3">
    <citation type="journal article" date="2004" name="Nat. Genet.">
        <title>Complete sequencing and characterization of 21,243 full-length human cDNAs.</title>
        <authorList>
            <person name="Ota T."/>
            <person name="Suzuki Y."/>
            <person name="Nishikawa T."/>
            <person name="Otsuki T."/>
            <person name="Sugiyama T."/>
            <person name="Irie R."/>
            <person name="Wakamatsu A."/>
            <person name="Hayashi K."/>
            <person name="Sato H."/>
            <person name="Nagai K."/>
            <person name="Kimura K."/>
            <person name="Makita H."/>
            <person name="Sekine M."/>
            <person name="Obayashi M."/>
            <person name="Nishi T."/>
            <person name="Shibahara T."/>
            <person name="Tanaka T."/>
            <person name="Ishii S."/>
            <person name="Yamamoto J."/>
            <person name="Saito K."/>
            <person name="Kawai Y."/>
            <person name="Isono Y."/>
            <person name="Nakamura Y."/>
            <person name="Nagahari K."/>
            <person name="Murakami K."/>
            <person name="Yasuda T."/>
            <person name="Iwayanagi T."/>
            <person name="Wagatsuma M."/>
            <person name="Shiratori A."/>
            <person name="Sudo H."/>
            <person name="Hosoiri T."/>
            <person name="Kaku Y."/>
            <person name="Kodaira H."/>
            <person name="Kondo H."/>
            <person name="Sugawara M."/>
            <person name="Takahashi M."/>
            <person name="Kanda K."/>
            <person name="Yokoi T."/>
            <person name="Furuya T."/>
            <person name="Kikkawa E."/>
            <person name="Omura Y."/>
            <person name="Abe K."/>
            <person name="Kamihara K."/>
            <person name="Katsuta N."/>
            <person name="Sato K."/>
            <person name="Tanikawa M."/>
            <person name="Yamazaki M."/>
            <person name="Ninomiya K."/>
            <person name="Ishibashi T."/>
            <person name="Yamashita H."/>
            <person name="Murakawa K."/>
            <person name="Fujimori K."/>
            <person name="Tanai H."/>
            <person name="Kimata M."/>
            <person name="Watanabe M."/>
            <person name="Hiraoka S."/>
            <person name="Chiba Y."/>
            <person name="Ishida S."/>
            <person name="Ono Y."/>
            <person name="Takiguchi S."/>
            <person name="Watanabe S."/>
            <person name="Yosida M."/>
            <person name="Hotuta T."/>
            <person name="Kusano J."/>
            <person name="Kanehori K."/>
            <person name="Takahashi-Fujii A."/>
            <person name="Hara H."/>
            <person name="Tanase T.-O."/>
            <person name="Nomura Y."/>
            <person name="Togiya S."/>
            <person name="Komai F."/>
            <person name="Hara R."/>
            <person name="Takeuchi K."/>
            <person name="Arita M."/>
            <person name="Imose N."/>
            <person name="Musashino K."/>
            <person name="Yuuki H."/>
            <person name="Oshima A."/>
            <person name="Sasaki N."/>
            <person name="Aotsuka S."/>
            <person name="Yoshikawa Y."/>
            <person name="Matsunawa H."/>
            <person name="Ichihara T."/>
            <person name="Shiohata N."/>
            <person name="Sano S."/>
            <person name="Moriya S."/>
            <person name="Momiyama H."/>
            <person name="Satoh N."/>
            <person name="Takami S."/>
            <person name="Terashima Y."/>
            <person name="Suzuki O."/>
            <person name="Nakagawa S."/>
            <person name="Senoh A."/>
            <person name="Mizoguchi H."/>
            <person name="Goto Y."/>
            <person name="Shimizu F."/>
            <person name="Wakebe H."/>
            <person name="Hishigaki H."/>
            <person name="Watanabe T."/>
            <person name="Sugiyama A."/>
            <person name="Takemoto M."/>
            <person name="Kawakami B."/>
            <person name="Yamazaki M."/>
            <person name="Watanabe K."/>
            <person name="Kumagai A."/>
            <person name="Itakura S."/>
            <person name="Fukuzumi Y."/>
            <person name="Fujimori Y."/>
            <person name="Komiyama M."/>
            <person name="Tashiro H."/>
            <person name="Tanigami A."/>
            <person name="Fujiwara T."/>
            <person name="Ono T."/>
            <person name="Yamada K."/>
            <person name="Fujii Y."/>
            <person name="Ozaki K."/>
            <person name="Hirao M."/>
            <person name="Ohmori Y."/>
            <person name="Kawabata A."/>
            <person name="Hikiji T."/>
            <person name="Kobatake N."/>
            <person name="Inagaki H."/>
            <person name="Ikema Y."/>
            <person name="Okamoto S."/>
            <person name="Okitani R."/>
            <person name="Kawakami T."/>
            <person name="Noguchi S."/>
            <person name="Itoh T."/>
            <person name="Shigeta K."/>
            <person name="Senba T."/>
            <person name="Matsumura K."/>
            <person name="Nakajima Y."/>
            <person name="Mizuno T."/>
            <person name="Morinaga M."/>
            <person name="Sasaki M."/>
            <person name="Togashi T."/>
            <person name="Oyama M."/>
            <person name="Hata H."/>
            <person name="Watanabe M."/>
            <person name="Komatsu T."/>
            <person name="Mizushima-Sugano J."/>
            <person name="Satoh T."/>
            <person name="Shirai Y."/>
            <person name="Takahashi Y."/>
            <person name="Nakagawa K."/>
            <person name="Okumura K."/>
            <person name="Nagase T."/>
            <person name="Nomura N."/>
            <person name="Kikuchi H."/>
            <person name="Masuho Y."/>
            <person name="Yamashita R."/>
            <person name="Nakai K."/>
            <person name="Yada T."/>
            <person name="Nakamura Y."/>
            <person name="Ohara O."/>
            <person name="Isogai T."/>
            <person name="Sugano S."/>
        </authorList>
    </citation>
    <scope>NUCLEOTIDE SEQUENCE [LARGE SCALE MRNA]</scope>
    <source>
        <tissue>Prostate</tissue>
    </source>
</reference>
<reference key="4">
    <citation type="journal article" date="2004" name="Nature">
        <title>The DNA sequence and comparative analysis of human chromosome 10.</title>
        <authorList>
            <person name="Deloukas P."/>
            <person name="Earthrowl M.E."/>
            <person name="Grafham D.V."/>
            <person name="Rubenfield M."/>
            <person name="French L."/>
            <person name="Steward C.A."/>
            <person name="Sims S.K."/>
            <person name="Jones M.C."/>
            <person name="Searle S."/>
            <person name="Scott C."/>
            <person name="Howe K."/>
            <person name="Hunt S.E."/>
            <person name="Andrews T.D."/>
            <person name="Gilbert J.G.R."/>
            <person name="Swarbreck D."/>
            <person name="Ashurst J.L."/>
            <person name="Taylor A."/>
            <person name="Battles J."/>
            <person name="Bird C.P."/>
            <person name="Ainscough R."/>
            <person name="Almeida J.P."/>
            <person name="Ashwell R.I.S."/>
            <person name="Ambrose K.D."/>
            <person name="Babbage A.K."/>
            <person name="Bagguley C.L."/>
            <person name="Bailey J."/>
            <person name="Banerjee R."/>
            <person name="Bates K."/>
            <person name="Beasley H."/>
            <person name="Bray-Allen S."/>
            <person name="Brown A.J."/>
            <person name="Brown J.Y."/>
            <person name="Burford D.C."/>
            <person name="Burrill W."/>
            <person name="Burton J."/>
            <person name="Cahill P."/>
            <person name="Camire D."/>
            <person name="Carter N.P."/>
            <person name="Chapman J.C."/>
            <person name="Clark S.Y."/>
            <person name="Clarke G."/>
            <person name="Clee C.M."/>
            <person name="Clegg S."/>
            <person name="Corby N."/>
            <person name="Coulson A."/>
            <person name="Dhami P."/>
            <person name="Dutta I."/>
            <person name="Dunn M."/>
            <person name="Faulkner L."/>
            <person name="Frankish A."/>
            <person name="Frankland J.A."/>
            <person name="Garner P."/>
            <person name="Garnett J."/>
            <person name="Gribble S."/>
            <person name="Griffiths C."/>
            <person name="Grocock R."/>
            <person name="Gustafson E."/>
            <person name="Hammond S."/>
            <person name="Harley J.L."/>
            <person name="Hart E."/>
            <person name="Heath P.D."/>
            <person name="Ho T.P."/>
            <person name="Hopkins B."/>
            <person name="Horne J."/>
            <person name="Howden P.J."/>
            <person name="Huckle E."/>
            <person name="Hynds C."/>
            <person name="Johnson C."/>
            <person name="Johnson D."/>
            <person name="Kana A."/>
            <person name="Kay M."/>
            <person name="Kimberley A.M."/>
            <person name="Kershaw J.K."/>
            <person name="Kokkinaki M."/>
            <person name="Laird G.K."/>
            <person name="Lawlor S."/>
            <person name="Lee H.M."/>
            <person name="Leongamornlert D.A."/>
            <person name="Laird G."/>
            <person name="Lloyd C."/>
            <person name="Lloyd D.M."/>
            <person name="Loveland J."/>
            <person name="Lovell J."/>
            <person name="McLaren S."/>
            <person name="McLay K.E."/>
            <person name="McMurray A."/>
            <person name="Mashreghi-Mohammadi M."/>
            <person name="Matthews L."/>
            <person name="Milne S."/>
            <person name="Nickerson T."/>
            <person name="Nguyen M."/>
            <person name="Overton-Larty E."/>
            <person name="Palmer S.A."/>
            <person name="Pearce A.V."/>
            <person name="Peck A.I."/>
            <person name="Pelan S."/>
            <person name="Phillimore B."/>
            <person name="Porter K."/>
            <person name="Rice C.M."/>
            <person name="Rogosin A."/>
            <person name="Ross M.T."/>
            <person name="Sarafidou T."/>
            <person name="Sehra H.K."/>
            <person name="Shownkeen R."/>
            <person name="Skuce C.D."/>
            <person name="Smith M."/>
            <person name="Standring L."/>
            <person name="Sycamore N."/>
            <person name="Tester J."/>
            <person name="Thorpe A."/>
            <person name="Torcasso W."/>
            <person name="Tracey A."/>
            <person name="Tromans A."/>
            <person name="Tsolas J."/>
            <person name="Wall M."/>
            <person name="Walsh J."/>
            <person name="Wang H."/>
            <person name="Weinstock K."/>
            <person name="West A.P."/>
            <person name="Willey D.L."/>
            <person name="Whitehead S.L."/>
            <person name="Wilming L."/>
            <person name="Wray P.W."/>
            <person name="Young L."/>
            <person name="Chen Y."/>
            <person name="Lovering R.C."/>
            <person name="Moschonas N.K."/>
            <person name="Siebert R."/>
            <person name="Fechtel K."/>
            <person name="Bentley D."/>
            <person name="Durbin R.M."/>
            <person name="Hubbard T."/>
            <person name="Doucette-Stamm L."/>
            <person name="Beck S."/>
            <person name="Smith D.R."/>
            <person name="Rogers J."/>
        </authorList>
    </citation>
    <scope>NUCLEOTIDE SEQUENCE [LARGE SCALE GENOMIC DNA]</scope>
</reference>
<reference key="5">
    <citation type="submission" date="2005-09" db="EMBL/GenBank/DDBJ databases">
        <authorList>
            <person name="Mural R.J."/>
            <person name="Istrail S."/>
            <person name="Sutton G.G."/>
            <person name="Florea L."/>
            <person name="Halpern A.L."/>
            <person name="Mobarry C.M."/>
            <person name="Lippert R."/>
            <person name="Walenz B."/>
            <person name="Shatkay H."/>
            <person name="Dew I."/>
            <person name="Miller J.R."/>
            <person name="Flanigan M.J."/>
            <person name="Edwards N.J."/>
            <person name="Bolanos R."/>
            <person name="Fasulo D."/>
            <person name="Halldorsson B.V."/>
            <person name="Hannenhalli S."/>
            <person name="Turner R."/>
            <person name="Yooseph S."/>
            <person name="Lu F."/>
            <person name="Nusskern D.R."/>
            <person name="Shue B.C."/>
            <person name="Zheng X.H."/>
            <person name="Zhong F."/>
            <person name="Delcher A.L."/>
            <person name="Huson D.H."/>
            <person name="Kravitz S.A."/>
            <person name="Mouchard L."/>
            <person name="Reinert K."/>
            <person name="Remington K.A."/>
            <person name="Clark A.G."/>
            <person name="Waterman M.S."/>
            <person name="Eichler E.E."/>
            <person name="Adams M.D."/>
            <person name="Hunkapiller M.W."/>
            <person name="Myers E.W."/>
            <person name="Venter J.C."/>
        </authorList>
    </citation>
    <scope>NUCLEOTIDE SEQUENCE [LARGE SCALE GENOMIC DNA]</scope>
</reference>
<reference key="6">
    <citation type="journal article" date="2004" name="Genome Res.">
        <title>The status, quality, and expansion of the NIH full-length cDNA project: the Mammalian Gene Collection (MGC).</title>
        <authorList>
            <consortium name="The MGC Project Team"/>
        </authorList>
    </citation>
    <scope>NUCLEOTIDE SEQUENCE [LARGE SCALE MRNA]</scope>
    <source>
        <tissue>Blood</tissue>
        <tissue>Lung</tissue>
        <tissue>Skeletal muscle</tissue>
    </source>
</reference>
<reference key="7">
    <citation type="journal article" date="2003" name="Nature">
        <title>Proteomic characterization of the human centrosome by protein correlation profiling.</title>
        <authorList>
            <person name="Andersen J.S."/>
            <person name="Wilkinson C.J."/>
            <person name="Mayor T."/>
            <person name="Mortensen P."/>
            <person name="Nigg E.A."/>
            <person name="Mann M."/>
        </authorList>
    </citation>
    <scope>IDENTIFICATION BY MASS SPECTROMETRY</scope>
    <source>
        <tissue>Lymphoblast</tissue>
    </source>
</reference>
<reference key="8">
    <citation type="journal article" date="2011" name="BMC Syst. Biol.">
        <title>Initial characterization of the human central proteome.</title>
        <authorList>
            <person name="Burkard T.R."/>
            <person name="Planyavsky M."/>
            <person name="Kaupe I."/>
            <person name="Breitwieser F.P."/>
            <person name="Buerckstuemmer T."/>
            <person name="Bennett K.L."/>
            <person name="Superti-Furga G."/>
            <person name="Colinge J."/>
        </authorList>
    </citation>
    <scope>IDENTIFICATION BY MASS SPECTROMETRY [LARGE SCALE ANALYSIS]</scope>
</reference>
<reference key="9">
    <citation type="journal article" date="2011" name="J. Biol. Chem.">
        <title>Knockdown of DAPIT (diabetes-associated protein in insulin-sensitive tissue) results in loss of ATP synthase in mitochondria.</title>
        <authorList>
            <person name="Ohsakaya S."/>
            <person name="Fujikawa M."/>
            <person name="Hisabori T."/>
            <person name="Yoshida M."/>
        </authorList>
    </citation>
    <scope>FUNCTION</scope>
    <scope>SUBCELLULAR LOCATION</scope>
</reference>
<reference key="10">
    <citation type="journal article" date="2015" name="Proteomics">
        <title>N-terminome analysis of the human mitochondrial proteome.</title>
        <authorList>
            <person name="Vaca Jacome A.S."/>
            <person name="Rabilloud T."/>
            <person name="Schaeffer-Reiss C."/>
            <person name="Rompais M."/>
            <person name="Ayoub D."/>
            <person name="Lane L."/>
            <person name="Bairoch A."/>
            <person name="Van Dorsselaer A."/>
            <person name="Carapito C."/>
        </authorList>
    </citation>
    <scope>CLEAVAGE OF INITIATOR METHIONINE [LARGE SCALE ANALYSIS]</scope>
    <scope>IDENTIFICATION BY MASS SPECTROMETRY [LARGE SCALE ANALYSIS]</scope>
</reference>
<reference key="11">
    <citation type="journal article" date="2018" name="Hum. Mol. Genet.">
        <title>USMG5 Ashkenazi Jewish founder mutation impairs mitochondrial complex V dimerization and ATP synthesis.</title>
        <authorList>
            <person name="Barca E."/>
            <person name="Ganetzky R.D."/>
            <person name="Potluri P."/>
            <person name="Juanola-Falgarona M."/>
            <person name="Gai X."/>
            <person name="Li D."/>
            <person name="Jalas C."/>
            <person name="Hirsch Y."/>
            <person name="Emmanuele V."/>
            <person name="Tadesse S."/>
            <person name="Ziosi M."/>
            <person name="Akman H.O."/>
            <person name="Chung W.K."/>
            <person name="Tanji K."/>
            <person name="McCormick E.M."/>
            <person name="Place E."/>
            <person name="Consugar M."/>
            <person name="Pierce E.A."/>
            <person name="Hakonarson H."/>
            <person name="Wallace D.C."/>
            <person name="Hirano M."/>
            <person name="Falk M.J."/>
        </authorList>
    </citation>
    <scope>INVOLVEMENT IN MC5DN6</scope>
    <scope>FUNCTION</scope>
    <scope>SUBUNIT</scope>
    <scope>SUBCELLULAR LOCATION</scope>
</reference>
<evidence type="ECO:0000250" key="1">
    <source>
        <dbReference type="UniProtKB" id="P19483"/>
    </source>
</evidence>
<evidence type="ECO:0000250" key="2">
    <source>
        <dbReference type="UniProtKB" id="Q3ZBI7"/>
    </source>
</evidence>
<evidence type="ECO:0000250" key="3">
    <source>
        <dbReference type="UniProtKB" id="Q78IK2"/>
    </source>
</evidence>
<evidence type="ECO:0000255" key="4"/>
<evidence type="ECO:0000269" key="5">
    <source>
    </source>
</evidence>
<evidence type="ECO:0000269" key="6">
    <source>
    </source>
</evidence>
<evidence type="ECO:0000269" key="7">
    <source>
    </source>
</evidence>
<evidence type="ECO:0000305" key="8"/>
<evidence type="ECO:0000305" key="9">
    <source>
    </source>
</evidence>
<evidence type="ECO:0000312" key="10">
    <source>
        <dbReference type="HGNC" id="HGNC:30889"/>
    </source>
</evidence>
<evidence type="ECO:0007744" key="11">
    <source>
    </source>
</evidence>